<gene>
    <name evidence="10" type="primary">cgoX</name>
    <name evidence="11" type="synonym">hemG</name>
    <name evidence="9" type="synonym">hemY</name>
    <name type="ordered locus">BSU10140</name>
</gene>
<feature type="chain" id="PRO_0000135263" description="Coproporphyrinogen III oxidase">
    <location>
        <begin position="1"/>
        <end position="470"/>
    </location>
</feature>
<feature type="binding site" evidence="4">
    <location>
        <begin position="12"/>
        <end position="17"/>
    </location>
    <ligand>
        <name>FAD</name>
        <dbReference type="ChEBI" id="CHEBI:57692"/>
    </ligand>
</feature>
<feature type="binding site" evidence="4">
    <location>
        <begin position="41"/>
        <end position="42"/>
    </location>
    <ligand>
        <name>FAD</name>
        <dbReference type="ChEBI" id="CHEBI:57692"/>
    </ligand>
</feature>
<feature type="binding site" evidence="4">
    <location>
        <position position="49"/>
    </location>
    <ligand>
        <name>FAD</name>
        <dbReference type="ChEBI" id="CHEBI:57692"/>
    </ligand>
</feature>
<feature type="binding site" evidence="4">
    <location>
        <begin position="63"/>
        <end position="66"/>
    </location>
    <ligand>
        <name>FAD</name>
        <dbReference type="ChEBI" id="CHEBI:57692"/>
    </ligand>
</feature>
<feature type="binding site" evidence="1">
    <location>
        <position position="256"/>
    </location>
    <ligand>
        <name>FAD</name>
        <dbReference type="ChEBI" id="CHEBI:57692"/>
    </ligand>
</feature>
<feature type="binding site" evidence="4">
    <location>
        <position position="409"/>
    </location>
    <ligand>
        <name>FAD</name>
        <dbReference type="ChEBI" id="CHEBI:57692"/>
    </ligand>
</feature>
<feature type="binding site" evidence="4">
    <location>
        <begin position="448"/>
        <end position="450"/>
    </location>
    <ligand>
        <name>FAD</name>
        <dbReference type="ChEBI" id="CHEBI:57692"/>
    </ligand>
</feature>
<feature type="mutagenesis site" description="Decreased affinity for protoporphyrinogen-IX." evidence="4">
    <original>P</original>
    <variation>A</variation>
    <location>
        <position position="64"/>
    </location>
</feature>
<feature type="mutagenesis site" description="Strongly decreased catalytic activity." evidence="4">
    <original>K</original>
    <variation>A</variation>
    <location>
        <position position="71"/>
    </location>
</feature>
<feature type="mutagenesis site" description="Strongly decreased catalytic activity." evidence="4">
    <original>I</original>
    <variation>A</variation>
    <location>
        <position position="176"/>
    </location>
</feature>
<feature type="mutagenesis site" description="Decreased affinity for protoporphyrinogen-IX." evidence="4">
    <original>F</original>
    <variation>R</variation>
    <location>
        <position position="227"/>
    </location>
</feature>
<feature type="mutagenesis site" description="Reduces protoporphyrinogen oxidation by 90%." evidence="3">
    <original>Y</original>
    <variation>A</variation>
    <variation>H</variation>
    <location>
        <position position="366"/>
    </location>
</feature>
<feature type="mutagenesis site" description="Reduces protoporphyrinogen oxidation by 99%." evidence="3">
    <original>Y</original>
    <variation>E</variation>
    <location>
        <position position="366"/>
    </location>
</feature>
<feature type="strand" evidence="14">
    <location>
        <begin position="6"/>
        <end position="11"/>
    </location>
</feature>
<feature type="helix" evidence="14">
    <location>
        <begin position="15"/>
        <end position="28"/>
    </location>
</feature>
<feature type="turn" evidence="14">
    <location>
        <begin position="29"/>
        <end position="32"/>
    </location>
</feature>
<feature type="strand" evidence="14">
    <location>
        <begin position="34"/>
        <end position="40"/>
    </location>
</feature>
<feature type="strand" evidence="14">
    <location>
        <begin position="42"/>
        <end position="46"/>
    </location>
</feature>
<feature type="strand" evidence="14">
    <location>
        <begin position="60"/>
        <end position="63"/>
    </location>
</feature>
<feature type="helix" evidence="14">
    <location>
        <begin position="73"/>
        <end position="80"/>
    </location>
</feature>
<feature type="strand" evidence="14">
    <location>
        <begin position="87"/>
        <end position="89"/>
    </location>
</feature>
<feature type="strand" evidence="14">
    <location>
        <begin position="95"/>
        <end position="98"/>
    </location>
</feature>
<feature type="strand" evidence="14">
    <location>
        <begin position="103"/>
        <end position="105"/>
    </location>
</feature>
<feature type="helix" evidence="14">
    <location>
        <begin position="133"/>
        <end position="140"/>
    </location>
</feature>
<feature type="strand" evidence="14">
    <location>
        <begin position="145"/>
        <end position="148"/>
    </location>
</feature>
<feature type="helix" evidence="14">
    <location>
        <begin position="152"/>
        <end position="159"/>
    </location>
</feature>
<feature type="helix" evidence="14">
    <location>
        <begin position="162"/>
        <end position="167"/>
    </location>
</feature>
<feature type="helix" evidence="14">
    <location>
        <begin position="169"/>
        <end position="175"/>
    </location>
</feature>
<feature type="turn" evidence="14">
    <location>
        <begin position="181"/>
        <end position="183"/>
    </location>
</feature>
<feature type="helix" evidence="14">
    <location>
        <begin position="186"/>
        <end position="189"/>
    </location>
</feature>
<feature type="helix" evidence="14">
    <location>
        <begin position="191"/>
        <end position="193"/>
    </location>
</feature>
<feature type="strand" evidence="14">
    <location>
        <begin position="227"/>
        <end position="230"/>
    </location>
</feature>
<feature type="helix" evidence="14">
    <location>
        <begin position="235"/>
        <end position="243"/>
    </location>
</feature>
<feature type="strand" evidence="14">
    <location>
        <begin position="247"/>
        <end position="251"/>
    </location>
</feature>
<feature type="strand" evidence="14">
    <location>
        <begin position="256"/>
        <end position="261"/>
    </location>
</feature>
<feature type="strand" evidence="14">
    <location>
        <begin position="263"/>
        <end position="273"/>
    </location>
</feature>
<feature type="strand" evidence="14">
    <location>
        <begin position="275"/>
        <end position="283"/>
    </location>
</feature>
<feature type="helix" evidence="14">
    <location>
        <begin position="287"/>
        <end position="293"/>
    </location>
</feature>
<feature type="turn" evidence="14">
    <location>
        <begin position="294"/>
        <end position="296"/>
    </location>
</feature>
<feature type="helix" evidence="14">
    <location>
        <begin position="300"/>
        <end position="304"/>
    </location>
</feature>
<feature type="strand" evidence="14">
    <location>
        <begin position="307"/>
        <end position="320"/>
    </location>
</feature>
<feature type="strand" evidence="14">
    <location>
        <begin position="329"/>
        <end position="334"/>
    </location>
</feature>
<feature type="strand" evidence="14">
    <location>
        <begin position="341"/>
        <end position="347"/>
    </location>
</feature>
<feature type="helix" evidence="14">
    <location>
        <begin position="348"/>
        <end position="351"/>
    </location>
</feature>
<feature type="helix" evidence="14">
    <location>
        <begin position="353"/>
        <end position="355"/>
    </location>
</feature>
<feature type="strand" evidence="14">
    <location>
        <begin position="361"/>
        <end position="367"/>
    </location>
</feature>
<feature type="helix" evidence="14">
    <location>
        <begin position="374"/>
        <end position="376"/>
    </location>
</feature>
<feature type="helix" evidence="14">
    <location>
        <begin position="380"/>
        <end position="391"/>
    </location>
</feature>
<feature type="helix" evidence="14">
    <location>
        <begin position="392"/>
        <end position="394"/>
    </location>
</feature>
<feature type="strand" evidence="14">
    <location>
        <begin position="402"/>
        <end position="415"/>
    </location>
</feature>
<feature type="helix" evidence="14">
    <location>
        <begin position="420"/>
        <end position="434"/>
    </location>
</feature>
<feature type="strand" evidence="14">
    <location>
        <begin position="438"/>
        <end position="440"/>
    </location>
</feature>
<feature type="turn" evidence="14">
    <location>
        <begin position="443"/>
        <end position="445"/>
    </location>
</feature>
<feature type="helix" evidence="14">
    <location>
        <begin position="450"/>
        <end position="468"/>
    </location>
</feature>
<keyword id="KW-0002">3D-structure</keyword>
<keyword id="KW-1003">Cell membrane</keyword>
<keyword id="KW-0963">Cytoplasm</keyword>
<keyword id="KW-0903">Direct protein sequencing</keyword>
<keyword id="KW-0274">FAD</keyword>
<keyword id="KW-0285">Flavoprotein</keyword>
<keyword id="KW-0350">Heme biosynthesis</keyword>
<keyword id="KW-0472">Membrane</keyword>
<keyword id="KW-0560">Oxidoreductase</keyword>
<keyword id="KW-1185">Reference proteome</keyword>
<reference key="1">
    <citation type="journal article" date="1992" name="J. Bacteriol.">
        <title>Cloning and characterization of the Bacillus subtilis hemEHY gene cluster, which encodes protoheme IX biosynthetic enzymes.</title>
        <authorList>
            <person name="Hansson M."/>
            <person name="Hederstedt L."/>
        </authorList>
    </citation>
    <scope>NUCLEOTIDE SEQUENCE [GENOMIC DNA]</scope>
    <scope>PATHWAY</scope>
</reference>
<reference key="2">
    <citation type="journal article" date="1998" name="Microbiology">
        <title>The 172 kb prkA-addAB region from 83 degrees to 97 degrees of the Bacillus subtilis chromosome contains several dysfunctional genes, the glyB marker, many genes encoding transporter proteins, and the ubiquitous hit gene.</title>
        <authorList>
            <person name="Noback M.A."/>
            <person name="Holsappel S."/>
            <person name="Kiewiet R."/>
            <person name="Terpstra P."/>
            <person name="Wambutt R."/>
            <person name="Wedler H."/>
            <person name="Venema G."/>
            <person name="Bron S."/>
        </authorList>
    </citation>
    <scope>NUCLEOTIDE SEQUENCE [GENOMIC DNA]</scope>
    <source>
        <strain>168</strain>
    </source>
</reference>
<reference key="3">
    <citation type="journal article" date="1997" name="Nature">
        <title>The complete genome sequence of the Gram-positive bacterium Bacillus subtilis.</title>
        <authorList>
            <person name="Kunst F."/>
            <person name="Ogasawara N."/>
            <person name="Moszer I."/>
            <person name="Albertini A.M."/>
            <person name="Alloni G."/>
            <person name="Azevedo V."/>
            <person name="Bertero M.G."/>
            <person name="Bessieres P."/>
            <person name="Bolotin A."/>
            <person name="Borchert S."/>
            <person name="Borriss R."/>
            <person name="Boursier L."/>
            <person name="Brans A."/>
            <person name="Braun M."/>
            <person name="Brignell S.C."/>
            <person name="Bron S."/>
            <person name="Brouillet S."/>
            <person name="Bruschi C.V."/>
            <person name="Caldwell B."/>
            <person name="Capuano V."/>
            <person name="Carter N.M."/>
            <person name="Choi S.-K."/>
            <person name="Codani J.-J."/>
            <person name="Connerton I.F."/>
            <person name="Cummings N.J."/>
            <person name="Daniel R.A."/>
            <person name="Denizot F."/>
            <person name="Devine K.M."/>
            <person name="Duesterhoeft A."/>
            <person name="Ehrlich S.D."/>
            <person name="Emmerson P.T."/>
            <person name="Entian K.-D."/>
            <person name="Errington J."/>
            <person name="Fabret C."/>
            <person name="Ferrari E."/>
            <person name="Foulger D."/>
            <person name="Fritz C."/>
            <person name="Fujita M."/>
            <person name="Fujita Y."/>
            <person name="Fuma S."/>
            <person name="Galizzi A."/>
            <person name="Galleron N."/>
            <person name="Ghim S.-Y."/>
            <person name="Glaser P."/>
            <person name="Goffeau A."/>
            <person name="Golightly E.J."/>
            <person name="Grandi G."/>
            <person name="Guiseppi G."/>
            <person name="Guy B.J."/>
            <person name="Haga K."/>
            <person name="Haiech J."/>
            <person name="Harwood C.R."/>
            <person name="Henaut A."/>
            <person name="Hilbert H."/>
            <person name="Holsappel S."/>
            <person name="Hosono S."/>
            <person name="Hullo M.-F."/>
            <person name="Itaya M."/>
            <person name="Jones L.-M."/>
            <person name="Joris B."/>
            <person name="Karamata D."/>
            <person name="Kasahara Y."/>
            <person name="Klaerr-Blanchard M."/>
            <person name="Klein C."/>
            <person name="Kobayashi Y."/>
            <person name="Koetter P."/>
            <person name="Koningstein G."/>
            <person name="Krogh S."/>
            <person name="Kumano M."/>
            <person name="Kurita K."/>
            <person name="Lapidus A."/>
            <person name="Lardinois S."/>
            <person name="Lauber J."/>
            <person name="Lazarevic V."/>
            <person name="Lee S.-M."/>
            <person name="Levine A."/>
            <person name="Liu H."/>
            <person name="Masuda S."/>
            <person name="Mauel C."/>
            <person name="Medigue C."/>
            <person name="Medina N."/>
            <person name="Mellado R.P."/>
            <person name="Mizuno M."/>
            <person name="Moestl D."/>
            <person name="Nakai S."/>
            <person name="Noback M."/>
            <person name="Noone D."/>
            <person name="O'Reilly M."/>
            <person name="Ogawa K."/>
            <person name="Ogiwara A."/>
            <person name="Oudega B."/>
            <person name="Park S.-H."/>
            <person name="Parro V."/>
            <person name="Pohl T.M."/>
            <person name="Portetelle D."/>
            <person name="Porwollik S."/>
            <person name="Prescott A.M."/>
            <person name="Presecan E."/>
            <person name="Pujic P."/>
            <person name="Purnelle B."/>
            <person name="Rapoport G."/>
            <person name="Rey M."/>
            <person name="Reynolds S."/>
            <person name="Rieger M."/>
            <person name="Rivolta C."/>
            <person name="Rocha E."/>
            <person name="Roche B."/>
            <person name="Rose M."/>
            <person name="Sadaie Y."/>
            <person name="Sato T."/>
            <person name="Scanlan E."/>
            <person name="Schleich S."/>
            <person name="Schroeter R."/>
            <person name="Scoffone F."/>
            <person name="Sekiguchi J."/>
            <person name="Sekowska A."/>
            <person name="Seror S.J."/>
            <person name="Serror P."/>
            <person name="Shin B.-S."/>
            <person name="Soldo B."/>
            <person name="Sorokin A."/>
            <person name="Tacconi E."/>
            <person name="Takagi T."/>
            <person name="Takahashi H."/>
            <person name="Takemaru K."/>
            <person name="Takeuchi M."/>
            <person name="Tamakoshi A."/>
            <person name="Tanaka T."/>
            <person name="Terpstra P."/>
            <person name="Tognoni A."/>
            <person name="Tosato V."/>
            <person name="Uchiyama S."/>
            <person name="Vandenbol M."/>
            <person name="Vannier F."/>
            <person name="Vassarotti A."/>
            <person name="Viari A."/>
            <person name="Wambutt R."/>
            <person name="Wedler E."/>
            <person name="Wedler H."/>
            <person name="Weitzenegger T."/>
            <person name="Winters P."/>
            <person name="Wipat A."/>
            <person name="Yamamoto H."/>
            <person name="Yamane K."/>
            <person name="Yasumoto K."/>
            <person name="Yata K."/>
            <person name="Yoshida K."/>
            <person name="Yoshikawa H.-F."/>
            <person name="Zumstein E."/>
            <person name="Yoshikawa H."/>
            <person name="Danchin A."/>
        </authorList>
    </citation>
    <scope>NUCLEOTIDE SEQUENCE [LARGE SCALE GENOMIC DNA]</scope>
    <source>
        <strain>168</strain>
    </source>
</reference>
<reference key="4">
    <citation type="journal article" date="1994" name="J. Bacteriol.">
        <title>Bacillus subtilis HemY is a peripheral membrane protein essential for protoheme IX synthesis which can oxidize coproporphyrinogen III and protoporphyrinogen IX.</title>
        <authorList>
            <person name="Hansson M."/>
            <person name="Hederstedt L."/>
        </authorList>
    </citation>
    <scope>PROTEIN SEQUENCE OF 2-8</scope>
    <scope>FUNCTION</scope>
    <scope>CATALYTIC ACTIVITY</scope>
    <scope>BIOPHYSICOCHEMICAL PROPERTIES</scope>
    <scope>PATHWAY</scope>
    <scope>SUBCELLULAR LOCATION</scope>
    <scope>DISRUPTION PHENOTYPE</scope>
</reference>
<reference key="5">
    <citation type="journal article" date="1994" name="J. Biol. Chem.">
        <title>Expression of a cloned protoporphyrinogen oxidase.</title>
        <authorList>
            <person name="Dailey T.A."/>
            <person name="Meissner P."/>
            <person name="Dailey H.A."/>
        </authorList>
    </citation>
    <scope>FUNCTION</scope>
    <scope>CATALYTIC ACTIVITY</scope>
    <scope>BIOPHYSICOCHEMICAL PROPERTIES</scope>
    <scope>ACTIVITY REGULATION</scope>
    <scope>SUBUNIT</scope>
    <scope>SUBCELLULAR LOCATION</scope>
    <scope>COFACTOR</scope>
</reference>
<reference key="6">
    <citation type="journal article" date="1997" name="Biochim. Biophys. Acta">
        <title>Isolated Bacillus subtilis HemY has coproporphyrinogen III to coproporphyrin III oxidase activity.</title>
        <authorList>
            <person name="Hansson M."/>
            <person name="Gustafsson M.C."/>
            <person name="Kannangara C.G."/>
            <person name="Hederstedt L."/>
        </authorList>
    </citation>
    <scope>FUNCTION</scope>
    <scope>CATALYTIC ACTIVITY</scope>
    <scope>COFACTOR</scope>
</reference>
<reference key="7">
    <citation type="journal article" date="1998" name="Arch. Biochem. Biophys.">
        <title>Purification of and kinetic studies on a cloned protoporphyrinogen oxidase from the aerobic bacterium Bacillus subtilis.</title>
        <authorList>
            <person name="Corrigall A.V."/>
            <person name="Siziba K.B."/>
            <person name="Maneli M.H."/>
            <person name="Shephard E.G."/>
            <person name="Ziman M."/>
            <person name="Dailey T.A."/>
            <person name="Dailey H.A."/>
            <person name="Kirsch R.E."/>
            <person name="Meissner P.N."/>
        </authorList>
    </citation>
    <scope>FUNCTION</scope>
    <scope>CATALYTIC ACTIVITY</scope>
    <scope>COFACTOR</scope>
    <scope>ACTIVITY REGULATION</scope>
    <scope>BIOPHYSICOCHEMICAL PROPERTIES</scope>
    <scope>SUBUNIT</scope>
</reference>
<reference key="8">
    <citation type="journal article" date="2009" name="Amino Acids">
        <title>Site-directed mutagenesis and computational study of the Y366 active site in Bacillus subtilis protoporphyrinogen oxidase.</title>
        <authorList>
            <person name="Sun L."/>
            <person name="Wen X."/>
            <person name="Tan Y."/>
            <person name="Li H."/>
            <person name="Yang X."/>
            <person name="Zhao Y."/>
            <person name="Wang B."/>
            <person name="Cao Q."/>
            <person name="Niu C."/>
            <person name="Xi Z."/>
        </authorList>
    </citation>
    <scope>FUNCTION</scope>
    <scope>MUTAGENESIS OF TYR-366</scope>
</reference>
<reference key="9">
    <citation type="journal article" date="2015" name="Arch. Biochem. Biophys.">
        <title>HemQ: An iron-coproporphyrin oxidative decarboxylase for protoheme synthesis in Firmicutes and Actinobacteria.</title>
        <authorList>
            <person name="Dailey H.A."/>
            <person name="Gerdes S."/>
        </authorList>
    </citation>
    <scope>PATHWAY</scope>
    <scope>REVIEW</scope>
</reference>
<reference key="10">
    <citation type="journal article" date="2017" name="Microbiol. Mol. Biol. Rev.">
        <title>Prokaryotic heme biosynthesis: multiple pathways to a common essential product.</title>
        <authorList>
            <person name="Dailey H.A."/>
            <person name="Dailey T.A."/>
            <person name="Gerdes S."/>
            <person name="Jahn D."/>
            <person name="Jahn M."/>
            <person name="O'Brian M.R."/>
            <person name="Warren M.J."/>
        </authorList>
    </citation>
    <scope>NOMENCLATURE</scope>
    <scope>REVIEW</scope>
</reference>
<reference key="11">
    <citation type="journal article" date="2010" name="J. Struct. Biol.">
        <title>Structural insight into unique properties of protoporphyrinogen oxidase from Bacillus subtilis.</title>
        <authorList>
            <person name="Qin X."/>
            <person name="Sun L."/>
            <person name="Wen X."/>
            <person name="Yang X."/>
            <person name="Tan Y."/>
            <person name="Jin H."/>
            <person name="Cao Q."/>
            <person name="Zhou W."/>
            <person name="Xi Z."/>
            <person name="Shen Y."/>
        </authorList>
    </citation>
    <scope>X-RAY CRYSTALLOGRAPHY (2.9 ANGSTROMS) IN COMPLEX WITH FAD AND THE INHIBITOR ACIFLUORFEN</scope>
    <scope>FUNCTION</scope>
    <scope>COFACTOR</scope>
    <scope>ACTIVITY REGULATION</scope>
    <scope>MUTAGENESIS OF PRO-64; LYS-71; ILE-176 AND PHE-227</scope>
    <scope>SUBUNIT</scope>
</reference>
<name>CGOX_BACSU</name>
<protein>
    <recommendedName>
        <fullName evidence="12">Coproporphyrinogen III oxidase</fullName>
        <ecNumber evidence="5 6 7 8">1.3.3.15</ecNumber>
    </recommendedName>
</protein>
<evidence type="ECO:0000250" key="1">
    <source>
        <dbReference type="UniProtKB" id="P56601"/>
    </source>
</evidence>
<evidence type="ECO:0000269" key="2">
    <source>
    </source>
</evidence>
<evidence type="ECO:0000269" key="3">
    <source>
    </source>
</evidence>
<evidence type="ECO:0000269" key="4">
    <source>
    </source>
</evidence>
<evidence type="ECO:0000269" key="5">
    <source>
    </source>
</evidence>
<evidence type="ECO:0000269" key="6">
    <source>
    </source>
</evidence>
<evidence type="ECO:0000269" key="7">
    <source>
    </source>
</evidence>
<evidence type="ECO:0000269" key="8">
    <source>
    </source>
</evidence>
<evidence type="ECO:0000303" key="9">
    <source>
    </source>
</evidence>
<evidence type="ECO:0000303" key="10">
    <source>
    </source>
</evidence>
<evidence type="ECO:0000303" key="11">
    <source>
    </source>
</evidence>
<evidence type="ECO:0000305" key="12"/>
<evidence type="ECO:0000305" key="13">
    <source>
    </source>
</evidence>
<evidence type="ECO:0007829" key="14">
    <source>
        <dbReference type="PDB" id="3I6D"/>
    </source>
</evidence>
<accession>P32397</accession>
<proteinExistence type="evidence at protein level"/>
<organism>
    <name type="scientific">Bacillus subtilis (strain 168)</name>
    <dbReference type="NCBI Taxonomy" id="224308"/>
    <lineage>
        <taxon>Bacteria</taxon>
        <taxon>Bacillati</taxon>
        <taxon>Bacillota</taxon>
        <taxon>Bacilli</taxon>
        <taxon>Bacillales</taxon>
        <taxon>Bacillaceae</taxon>
        <taxon>Bacillus</taxon>
    </lineage>
</organism>
<dbReference type="EC" id="1.3.3.15" evidence="5 6 7 8"/>
<dbReference type="EMBL" id="M97208">
    <property type="protein sequence ID" value="AAA22519.1"/>
    <property type="molecule type" value="Genomic_DNA"/>
</dbReference>
<dbReference type="EMBL" id="Y14083">
    <property type="protein sequence ID" value="CAA74520.1"/>
    <property type="molecule type" value="Genomic_DNA"/>
</dbReference>
<dbReference type="EMBL" id="AL009126">
    <property type="protein sequence ID" value="CAB12854.1"/>
    <property type="molecule type" value="Genomic_DNA"/>
</dbReference>
<dbReference type="PIR" id="D47045">
    <property type="entry name" value="D47045"/>
</dbReference>
<dbReference type="RefSeq" id="NP_388895.1">
    <property type="nucleotide sequence ID" value="NC_000964.3"/>
</dbReference>
<dbReference type="RefSeq" id="WP_003245394.1">
    <property type="nucleotide sequence ID" value="NZ_OZ025638.1"/>
</dbReference>
<dbReference type="PDB" id="3I6D">
    <property type="method" value="X-ray"/>
    <property type="resolution" value="2.90 A"/>
    <property type="chains" value="A/B=1-470"/>
</dbReference>
<dbReference type="PDBsum" id="3I6D"/>
<dbReference type="SMR" id="P32397"/>
<dbReference type="FunCoup" id="P32397">
    <property type="interactions" value="638"/>
</dbReference>
<dbReference type="STRING" id="224308.BSU10140"/>
<dbReference type="BindingDB" id="P32397"/>
<dbReference type="ChEMBL" id="CHEMBL1075048"/>
<dbReference type="DrugBank" id="DB07338">
    <property type="generic name" value="Acifluorfen"/>
</dbReference>
<dbReference type="jPOST" id="P32397"/>
<dbReference type="PaxDb" id="224308-BSU10140"/>
<dbReference type="DNASU" id="936311"/>
<dbReference type="EnsemblBacteria" id="CAB12854">
    <property type="protein sequence ID" value="CAB12854"/>
    <property type="gene ID" value="BSU_10140"/>
</dbReference>
<dbReference type="GeneID" id="936311"/>
<dbReference type="KEGG" id="bsu:BSU10140"/>
<dbReference type="PATRIC" id="fig|224308.179.peg.1090"/>
<dbReference type="eggNOG" id="COG1232">
    <property type="taxonomic scope" value="Bacteria"/>
</dbReference>
<dbReference type="InParanoid" id="P32397"/>
<dbReference type="OrthoDB" id="9805195at2"/>
<dbReference type="PhylomeDB" id="P32397"/>
<dbReference type="BioCyc" id="BSUB:BSU10140-MONOMER"/>
<dbReference type="BioCyc" id="MetaCyc:BSU10140-MONOMER"/>
<dbReference type="BRENDA" id="1.3.3.15">
    <property type="organism ID" value="658"/>
</dbReference>
<dbReference type="BRENDA" id="1.3.3.4">
    <property type="organism ID" value="658"/>
</dbReference>
<dbReference type="SABIO-RK" id="P32397"/>
<dbReference type="UniPathway" id="UPA00252"/>
<dbReference type="EvolutionaryTrace" id="P32397"/>
<dbReference type="PRO" id="PR:P32397"/>
<dbReference type="Proteomes" id="UP000001570">
    <property type="component" value="Chromosome"/>
</dbReference>
<dbReference type="GO" id="GO:0005737">
    <property type="term" value="C:cytoplasm"/>
    <property type="evidence" value="ECO:0007669"/>
    <property type="project" value="UniProtKB-SubCell"/>
</dbReference>
<dbReference type="GO" id="GO:0005886">
    <property type="term" value="C:plasma membrane"/>
    <property type="evidence" value="ECO:0007669"/>
    <property type="project" value="UniProtKB-SubCell"/>
</dbReference>
<dbReference type="GO" id="GO:0016491">
    <property type="term" value="F:oxidoreductase activity"/>
    <property type="evidence" value="ECO:0000318"/>
    <property type="project" value="GO_Central"/>
</dbReference>
<dbReference type="GO" id="GO:0004729">
    <property type="term" value="F:oxygen-dependent protoporphyrinogen oxidase activity"/>
    <property type="evidence" value="ECO:0007669"/>
    <property type="project" value="InterPro"/>
</dbReference>
<dbReference type="GO" id="GO:0006783">
    <property type="term" value="P:heme biosynthetic process"/>
    <property type="evidence" value="ECO:0007669"/>
    <property type="project" value="UniProtKB-KW"/>
</dbReference>
<dbReference type="FunFam" id="1.10.3110.10:FF:000001">
    <property type="entry name" value="Protoporphyrinogen oxidase"/>
    <property type="match status" value="1"/>
</dbReference>
<dbReference type="Gene3D" id="3.50.50.60">
    <property type="entry name" value="FAD/NAD(P)-binding domain"/>
    <property type="match status" value="1"/>
</dbReference>
<dbReference type="Gene3D" id="1.10.3110.10">
    <property type="entry name" value="protoporphyrinogen ix oxidase, domain 3"/>
    <property type="match status" value="1"/>
</dbReference>
<dbReference type="Gene3D" id="3.90.660.20">
    <property type="entry name" value="Protoporphyrinogen oxidase, mitochondrial, domain 2"/>
    <property type="match status" value="1"/>
</dbReference>
<dbReference type="InterPro" id="IPR002937">
    <property type="entry name" value="Amino_oxidase"/>
</dbReference>
<dbReference type="InterPro" id="IPR036188">
    <property type="entry name" value="FAD/NAD-bd_sf"/>
</dbReference>
<dbReference type="InterPro" id="IPR004572">
    <property type="entry name" value="Protoporphyrinogen_oxidase"/>
</dbReference>
<dbReference type="InterPro" id="IPR050464">
    <property type="entry name" value="Zeta_carotene_desat/Oxidored"/>
</dbReference>
<dbReference type="NCBIfam" id="NF008845">
    <property type="entry name" value="PRK11883.1-5"/>
    <property type="match status" value="1"/>
</dbReference>
<dbReference type="NCBIfam" id="TIGR00562">
    <property type="entry name" value="proto_IX_ox"/>
    <property type="match status" value="1"/>
</dbReference>
<dbReference type="PANTHER" id="PTHR42923">
    <property type="entry name" value="PROTOPORPHYRINOGEN OXIDASE"/>
    <property type="match status" value="1"/>
</dbReference>
<dbReference type="PANTHER" id="PTHR42923:SF3">
    <property type="entry name" value="PROTOPORPHYRINOGEN OXIDASE"/>
    <property type="match status" value="1"/>
</dbReference>
<dbReference type="Pfam" id="PF01593">
    <property type="entry name" value="Amino_oxidase"/>
    <property type="match status" value="1"/>
</dbReference>
<dbReference type="SUPFAM" id="SSF54373">
    <property type="entry name" value="FAD-linked reductases, C-terminal domain"/>
    <property type="match status" value="1"/>
</dbReference>
<dbReference type="SUPFAM" id="SSF51905">
    <property type="entry name" value="FAD/NAD(P)-binding domain"/>
    <property type="match status" value="1"/>
</dbReference>
<comment type="function">
    <text evidence="4 5 6 7 8">Involved in coproporphyrin-dependent heme b biosynthesis (PubMed:7928957, PubMed:9217019). Catalyzes the oxidation of coproporphyrinogen III to coproporphyrin III (PubMed:7928957, PubMed:8288631, PubMed:9217019, PubMed:9784236). Can also oxidize protoporphyrinogen IX to protoporphyrin-IX (PubMed:19944166, PubMed:7928957, PubMed:8288631, PubMed:9217019, PubMed:9784236). The specific activity for the oxidation of coproporphyrinogen III is much higher than that for the oxidation of protoporphyrinogen IX (PubMed:7928957, PubMed:9217019). Can also oxidize mesoporphyrinogen IX, but not uroporphyrinogen III (PubMed:7928957, PubMed:8288631, PubMed:9784236).</text>
</comment>
<comment type="catalytic activity">
    <reaction evidence="5 6 7 8">
        <text>coproporphyrinogen III + 3 O2 = coproporphyrin III + 3 H2O2</text>
        <dbReference type="Rhea" id="RHEA:43436"/>
        <dbReference type="ChEBI" id="CHEBI:15379"/>
        <dbReference type="ChEBI" id="CHEBI:16240"/>
        <dbReference type="ChEBI" id="CHEBI:57309"/>
        <dbReference type="ChEBI" id="CHEBI:131725"/>
        <dbReference type="EC" id="1.3.3.15"/>
    </reaction>
    <physiologicalReaction direction="left-to-right" evidence="5 6 7 8">
        <dbReference type="Rhea" id="RHEA:43437"/>
    </physiologicalReaction>
</comment>
<comment type="cofactor">
    <cofactor evidence="4 6 7 8">
        <name>FAD</name>
        <dbReference type="ChEBI" id="CHEBI:57692"/>
    </cofactor>
    <text evidence="4">Binds 1 FAD per subunit.</text>
</comment>
<comment type="activity regulation">
    <text evidence="4 6 8">Only weakly inhibited by acifluorfen, in contrast to eukaryotic family members (PubMed:19944166, PubMed:8288631, PubMed:9784236). Weakly inhibited by methylacifluorfen (PubMed:9784236). Bilirubin, biliverdin and hemin are all competitive inhibitors (PubMed:9784236).</text>
</comment>
<comment type="biophysicochemical properties">
    <kinetics>
        <KM evidence="5">0.56 uM for coproporphyrinogen III</KM>
        <KM evidence="8">5.29 uM for coproporphyrinogen III</KM>
        <KM evidence="5">0.95 uM for protoporphyrinogen IX</KM>
        <KM evidence="6">10.4 uM for protoporphyrinogen IX</KM>
        <KM evidence="8">1 uM for protoporphyrinogen IX</KM>
        <KM evidence="6">21.1 uM for mesoporphyrinogen IX</KM>
        <KM evidence="8">4.92 uM for mesoporphyrinogen IX</KM>
        <Vmax evidence="5">7.0 nmol/min/mg enzyme with coproporphyrinogen III as substrate</Vmax>
        <Vmax evidence="8">0.98 nmol/min/mg enzyme with coproporphyrinogen III as substrate</Vmax>
        <Vmax evidence="5">0.85 nmol/min/mg enzyme with protoporphyrinogen IX as substrate</Vmax>
        <Vmax evidence="8">3.7 nmol/min/mg enzyme with protoporphyrinogen IX as substrate</Vmax>
        <Vmax evidence="8">45.0 nmol/min/mg enzyme with mesoporphyrinogen IX as substrate</Vmax>
        <text evidence="8">kcat is 0.05 min(-1) with coproporphyrinogen III as substrate (PubMed:9784236). kcat is 0.19 min(-1) with protoporphyrinogen IX as substrate (PubMed:9784236). kcat is 2.69 min(-1) with mesoporphyrinogen IX as substrate (PubMed:9784236).</text>
    </kinetics>
    <phDependence>
        <text evidence="8">Optimum pH is 8.7 (for protoporphyrinogen oxidation).</text>
    </phDependence>
</comment>
<comment type="pathway">
    <text evidence="2 5 13">Porphyrin-containing compound metabolism; protoheme biosynthesis.</text>
</comment>
<comment type="subunit">
    <text evidence="4 6 8">Monomer.</text>
</comment>
<comment type="subcellular location">
    <subcellularLocation>
        <location evidence="6">Cytoplasm</location>
    </subcellularLocation>
    <subcellularLocation>
        <location evidence="5">Cell membrane</location>
        <topology evidence="5">Peripheral membrane protein</topology>
    </subcellularLocation>
</comment>
<comment type="disruption phenotype">
    <text evidence="5">Mutations cause the accumulation of coproporphyrinogen III or coproporphyrin III in the growth medium and the accumulation of trace amounts of other porphyrinogens or porphyrins intracellularly.</text>
</comment>
<comment type="similarity">
    <text evidence="12">Belongs to the protoporphyrinogen/coproporphyrinogen oxidase family. Coproporphyrinogen III oxidase subfamily.</text>
</comment>
<sequence length="470" mass="51203">MSDGKKHVVIIGGGITGLAAAFYMEKEIKEKNLPLELTLVEASPRVGGKIQTVKKDGYIIERGPDSFLERKKSAPQLVKDLGLEHLLVNNATGQSYVLVNRTLHPMPKGAVMGIPTKIAPFVSTGLFSLSGKARAAMDFILPASKTKDDQSLGEFFRRRVGDEVVENLIEPLLSGIYAGDIDKLSLMSTFPQFYQTEQKHRSLILGMKKTRPQGSGQQLTAKKQGQFQTLSTGLQTLVEEIEKQLKLTKVYKGTKVTKLSHSGSCYSLELDNGVTLDADSVIVTAPHKAAAGMLSELPAISHLKNMHSTSVANVALGFPEGSVQMEHEGTGFVISRNSDFAITACTWTNKKWPHAAPEGKTLLRAYVGKAGDESIVDLSDNDIINIVLEDLKKVMNINGEPEMTCVTRWHESMPQYHVGHKQRIKELREALASAYPGVYMTGASFEGVGIPDCIDQGKAAVSDALTYLFS</sequence>